<reference key="1">
    <citation type="journal article" date="2000" name="Biochem. J.">
        <title>Activity and genomic organization of human glucose transporter 9 (GLUT9), a novel member of the family of sugar-transport facilitators predominantly expressed in brain and leucocytes.</title>
        <authorList>
            <person name="Doege H."/>
            <person name="Bocianski A."/>
            <person name="Joost H.-G."/>
            <person name="Schuermann A."/>
        </authorList>
    </citation>
    <scope>NUCLEOTIDE SEQUENCE [MRNA] (ISOFORM 1)</scope>
    <scope>TISSUE SPECIFICITY</scope>
    <scope>VARIANT MET-500</scope>
    <source>
        <tissue>Leukocyte</tissue>
    </source>
</reference>
<reference key="2">
    <citation type="submission" date="1998-09" db="EMBL/GenBank/DDBJ databases">
        <title>Cloning of a sugar transporter gene, a G-beta subunit like gene and three novel genes in human chromosome 9q34.</title>
        <authorList>
            <person name="Young J.M."/>
            <person name="Woodward K.J."/>
            <person name="Aziz S."/>
            <person name="Burley M."/>
            <person name="Kwiatkowski D.J."/>
            <person name="Povey S."/>
        </authorList>
    </citation>
    <scope>NUCLEOTIDE SEQUENCE [MRNA] (ISOFORM 1)</scope>
    <scope>VARIANT MET-500</scope>
    <source>
        <tissue>Lymphoid tissue</tissue>
    </source>
</reference>
<reference key="3">
    <citation type="journal article" date="2004" name="Nat. Genet.">
        <title>Complete sequencing and characterization of 21,243 full-length human cDNAs.</title>
        <authorList>
            <person name="Ota T."/>
            <person name="Suzuki Y."/>
            <person name="Nishikawa T."/>
            <person name="Otsuki T."/>
            <person name="Sugiyama T."/>
            <person name="Irie R."/>
            <person name="Wakamatsu A."/>
            <person name="Hayashi K."/>
            <person name="Sato H."/>
            <person name="Nagai K."/>
            <person name="Kimura K."/>
            <person name="Makita H."/>
            <person name="Sekine M."/>
            <person name="Obayashi M."/>
            <person name="Nishi T."/>
            <person name="Shibahara T."/>
            <person name="Tanaka T."/>
            <person name="Ishii S."/>
            <person name="Yamamoto J."/>
            <person name="Saito K."/>
            <person name="Kawai Y."/>
            <person name="Isono Y."/>
            <person name="Nakamura Y."/>
            <person name="Nagahari K."/>
            <person name="Murakami K."/>
            <person name="Yasuda T."/>
            <person name="Iwayanagi T."/>
            <person name="Wagatsuma M."/>
            <person name="Shiratori A."/>
            <person name="Sudo H."/>
            <person name="Hosoiri T."/>
            <person name="Kaku Y."/>
            <person name="Kodaira H."/>
            <person name="Kondo H."/>
            <person name="Sugawara M."/>
            <person name="Takahashi M."/>
            <person name="Kanda K."/>
            <person name="Yokoi T."/>
            <person name="Furuya T."/>
            <person name="Kikkawa E."/>
            <person name="Omura Y."/>
            <person name="Abe K."/>
            <person name="Kamihara K."/>
            <person name="Katsuta N."/>
            <person name="Sato K."/>
            <person name="Tanikawa M."/>
            <person name="Yamazaki M."/>
            <person name="Ninomiya K."/>
            <person name="Ishibashi T."/>
            <person name="Yamashita H."/>
            <person name="Murakawa K."/>
            <person name="Fujimori K."/>
            <person name="Tanai H."/>
            <person name="Kimata M."/>
            <person name="Watanabe M."/>
            <person name="Hiraoka S."/>
            <person name="Chiba Y."/>
            <person name="Ishida S."/>
            <person name="Ono Y."/>
            <person name="Takiguchi S."/>
            <person name="Watanabe S."/>
            <person name="Yosida M."/>
            <person name="Hotuta T."/>
            <person name="Kusano J."/>
            <person name="Kanehori K."/>
            <person name="Takahashi-Fujii A."/>
            <person name="Hara H."/>
            <person name="Tanase T.-O."/>
            <person name="Nomura Y."/>
            <person name="Togiya S."/>
            <person name="Komai F."/>
            <person name="Hara R."/>
            <person name="Takeuchi K."/>
            <person name="Arita M."/>
            <person name="Imose N."/>
            <person name="Musashino K."/>
            <person name="Yuuki H."/>
            <person name="Oshima A."/>
            <person name="Sasaki N."/>
            <person name="Aotsuka S."/>
            <person name="Yoshikawa Y."/>
            <person name="Matsunawa H."/>
            <person name="Ichihara T."/>
            <person name="Shiohata N."/>
            <person name="Sano S."/>
            <person name="Moriya S."/>
            <person name="Momiyama H."/>
            <person name="Satoh N."/>
            <person name="Takami S."/>
            <person name="Terashima Y."/>
            <person name="Suzuki O."/>
            <person name="Nakagawa S."/>
            <person name="Senoh A."/>
            <person name="Mizoguchi H."/>
            <person name="Goto Y."/>
            <person name="Shimizu F."/>
            <person name="Wakebe H."/>
            <person name="Hishigaki H."/>
            <person name="Watanabe T."/>
            <person name="Sugiyama A."/>
            <person name="Takemoto M."/>
            <person name="Kawakami B."/>
            <person name="Yamazaki M."/>
            <person name="Watanabe K."/>
            <person name="Kumagai A."/>
            <person name="Itakura S."/>
            <person name="Fukuzumi Y."/>
            <person name="Fujimori Y."/>
            <person name="Komiyama M."/>
            <person name="Tashiro H."/>
            <person name="Tanigami A."/>
            <person name="Fujiwara T."/>
            <person name="Ono T."/>
            <person name="Yamada K."/>
            <person name="Fujii Y."/>
            <person name="Ozaki K."/>
            <person name="Hirao M."/>
            <person name="Ohmori Y."/>
            <person name="Kawabata A."/>
            <person name="Hikiji T."/>
            <person name="Kobatake N."/>
            <person name="Inagaki H."/>
            <person name="Ikema Y."/>
            <person name="Okamoto S."/>
            <person name="Okitani R."/>
            <person name="Kawakami T."/>
            <person name="Noguchi S."/>
            <person name="Itoh T."/>
            <person name="Shigeta K."/>
            <person name="Senba T."/>
            <person name="Matsumura K."/>
            <person name="Nakajima Y."/>
            <person name="Mizuno T."/>
            <person name="Morinaga M."/>
            <person name="Sasaki M."/>
            <person name="Togashi T."/>
            <person name="Oyama M."/>
            <person name="Hata H."/>
            <person name="Watanabe M."/>
            <person name="Komatsu T."/>
            <person name="Mizushima-Sugano J."/>
            <person name="Satoh T."/>
            <person name="Shirai Y."/>
            <person name="Takahashi Y."/>
            <person name="Nakagawa K."/>
            <person name="Okumura K."/>
            <person name="Nagase T."/>
            <person name="Nomura N."/>
            <person name="Kikuchi H."/>
            <person name="Masuho Y."/>
            <person name="Yamashita R."/>
            <person name="Nakai K."/>
            <person name="Yada T."/>
            <person name="Nakamura Y."/>
            <person name="Ohara O."/>
            <person name="Isogai T."/>
            <person name="Sugano S."/>
        </authorList>
    </citation>
    <scope>NUCLEOTIDE SEQUENCE [LARGE SCALE MRNA] (ISOFORM 1)</scope>
</reference>
<reference key="4">
    <citation type="journal article" date="2005" name="DNA Res.">
        <title>Signal sequence and keyword trap in silico for selection of full-length human cDNAs encoding secretion or membrane proteins from oligo-capped cDNA libraries.</title>
        <authorList>
            <person name="Otsuki T."/>
            <person name="Ota T."/>
            <person name="Nishikawa T."/>
            <person name="Hayashi K."/>
            <person name="Suzuki Y."/>
            <person name="Yamamoto J."/>
            <person name="Wakamatsu A."/>
            <person name="Kimura K."/>
            <person name="Sakamoto K."/>
            <person name="Hatano N."/>
            <person name="Kawai Y."/>
            <person name="Ishii S."/>
            <person name="Saito K."/>
            <person name="Kojima S."/>
            <person name="Sugiyama T."/>
            <person name="Ono T."/>
            <person name="Okano K."/>
            <person name="Yoshikawa Y."/>
            <person name="Aotsuka S."/>
            <person name="Sasaki N."/>
            <person name="Hattori A."/>
            <person name="Okumura K."/>
            <person name="Nagai K."/>
            <person name="Sugano S."/>
            <person name="Isogai T."/>
        </authorList>
    </citation>
    <scope>NUCLEOTIDE SEQUENCE [LARGE SCALE MRNA] (ISOFORM 2)</scope>
    <source>
        <tissue>Teratocarcinoma</tissue>
    </source>
</reference>
<reference key="5">
    <citation type="submission" date="2005-04" db="EMBL/GenBank/DDBJ databases">
        <authorList>
            <person name="Suzuki Y."/>
            <person name="Sugano S."/>
            <person name="Totoki Y."/>
            <person name="Toyoda A."/>
            <person name="Takeda T."/>
            <person name="Sakaki Y."/>
            <person name="Tanaka A."/>
            <person name="Yokoyama S."/>
        </authorList>
    </citation>
    <scope>NUCLEOTIDE SEQUENCE [LARGE SCALE MRNA] (ISOFORM 1)</scope>
    <source>
        <tissue>Kidney</tissue>
    </source>
</reference>
<reference key="6">
    <citation type="journal article" date="2004" name="Nature">
        <title>DNA sequence and analysis of human chromosome 9.</title>
        <authorList>
            <person name="Humphray S.J."/>
            <person name="Oliver K."/>
            <person name="Hunt A.R."/>
            <person name="Plumb R.W."/>
            <person name="Loveland J.E."/>
            <person name="Howe K.L."/>
            <person name="Andrews T.D."/>
            <person name="Searle S."/>
            <person name="Hunt S.E."/>
            <person name="Scott C.E."/>
            <person name="Jones M.C."/>
            <person name="Ainscough R."/>
            <person name="Almeida J.P."/>
            <person name="Ambrose K.D."/>
            <person name="Ashwell R.I.S."/>
            <person name="Babbage A.K."/>
            <person name="Babbage S."/>
            <person name="Bagguley C.L."/>
            <person name="Bailey J."/>
            <person name="Banerjee R."/>
            <person name="Barker D.J."/>
            <person name="Barlow K.F."/>
            <person name="Bates K."/>
            <person name="Beasley H."/>
            <person name="Beasley O."/>
            <person name="Bird C.P."/>
            <person name="Bray-Allen S."/>
            <person name="Brown A.J."/>
            <person name="Brown J.Y."/>
            <person name="Burford D."/>
            <person name="Burrill W."/>
            <person name="Burton J."/>
            <person name="Carder C."/>
            <person name="Carter N.P."/>
            <person name="Chapman J.C."/>
            <person name="Chen Y."/>
            <person name="Clarke G."/>
            <person name="Clark S.Y."/>
            <person name="Clee C.M."/>
            <person name="Clegg S."/>
            <person name="Collier R.E."/>
            <person name="Corby N."/>
            <person name="Crosier M."/>
            <person name="Cummings A.T."/>
            <person name="Davies J."/>
            <person name="Dhami P."/>
            <person name="Dunn M."/>
            <person name="Dutta I."/>
            <person name="Dyer L.W."/>
            <person name="Earthrowl M.E."/>
            <person name="Faulkner L."/>
            <person name="Fleming C.J."/>
            <person name="Frankish A."/>
            <person name="Frankland J.A."/>
            <person name="French L."/>
            <person name="Fricker D.G."/>
            <person name="Garner P."/>
            <person name="Garnett J."/>
            <person name="Ghori J."/>
            <person name="Gilbert J.G.R."/>
            <person name="Glison C."/>
            <person name="Grafham D.V."/>
            <person name="Gribble S."/>
            <person name="Griffiths C."/>
            <person name="Griffiths-Jones S."/>
            <person name="Grocock R."/>
            <person name="Guy J."/>
            <person name="Hall R.E."/>
            <person name="Hammond S."/>
            <person name="Harley J.L."/>
            <person name="Harrison E.S.I."/>
            <person name="Hart E.A."/>
            <person name="Heath P.D."/>
            <person name="Henderson C.D."/>
            <person name="Hopkins B.L."/>
            <person name="Howard P.J."/>
            <person name="Howden P.J."/>
            <person name="Huckle E."/>
            <person name="Johnson C."/>
            <person name="Johnson D."/>
            <person name="Joy A.A."/>
            <person name="Kay M."/>
            <person name="Keenan S."/>
            <person name="Kershaw J.K."/>
            <person name="Kimberley A.M."/>
            <person name="King A."/>
            <person name="Knights A."/>
            <person name="Laird G.K."/>
            <person name="Langford C."/>
            <person name="Lawlor S."/>
            <person name="Leongamornlert D.A."/>
            <person name="Leversha M."/>
            <person name="Lloyd C."/>
            <person name="Lloyd D.M."/>
            <person name="Lovell J."/>
            <person name="Martin S."/>
            <person name="Mashreghi-Mohammadi M."/>
            <person name="Matthews L."/>
            <person name="McLaren S."/>
            <person name="McLay K.E."/>
            <person name="McMurray A."/>
            <person name="Milne S."/>
            <person name="Nickerson T."/>
            <person name="Nisbett J."/>
            <person name="Nordsiek G."/>
            <person name="Pearce A.V."/>
            <person name="Peck A.I."/>
            <person name="Porter K.M."/>
            <person name="Pandian R."/>
            <person name="Pelan S."/>
            <person name="Phillimore B."/>
            <person name="Povey S."/>
            <person name="Ramsey Y."/>
            <person name="Rand V."/>
            <person name="Scharfe M."/>
            <person name="Sehra H.K."/>
            <person name="Shownkeen R."/>
            <person name="Sims S.K."/>
            <person name="Skuce C.D."/>
            <person name="Smith M."/>
            <person name="Steward C.A."/>
            <person name="Swarbreck D."/>
            <person name="Sycamore N."/>
            <person name="Tester J."/>
            <person name="Thorpe A."/>
            <person name="Tracey A."/>
            <person name="Tromans A."/>
            <person name="Thomas D.W."/>
            <person name="Wall M."/>
            <person name="Wallis J.M."/>
            <person name="West A.P."/>
            <person name="Whitehead S.L."/>
            <person name="Willey D.L."/>
            <person name="Williams S.A."/>
            <person name="Wilming L."/>
            <person name="Wray P.W."/>
            <person name="Young L."/>
            <person name="Ashurst J.L."/>
            <person name="Coulson A."/>
            <person name="Blocker H."/>
            <person name="Durbin R.M."/>
            <person name="Sulston J.E."/>
            <person name="Hubbard T."/>
            <person name="Jackson M.J."/>
            <person name="Bentley D.R."/>
            <person name="Beck S."/>
            <person name="Rogers J."/>
            <person name="Dunham I."/>
        </authorList>
    </citation>
    <scope>NUCLEOTIDE SEQUENCE [LARGE SCALE GENOMIC DNA]</scope>
</reference>
<reference key="7">
    <citation type="submission" date="2005-07" db="EMBL/GenBank/DDBJ databases">
        <authorList>
            <person name="Mural R.J."/>
            <person name="Istrail S."/>
            <person name="Sutton G.G."/>
            <person name="Florea L."/>
            <person name="Halpern A.L."/>
            <person name="Mobarry C.M."/>
            <person name="Lippert R."/>
            <person name="Walenz B."/>
            <person name="Shatkay H."/>
            <person name="Dew I."/>
            <person name="Miller J.R."/>
            <person name="Flanigan M.J."/>
            <person name="Edwards N.J."/>
            <person name="Bolanos R."/>
            <person name="Fasulo D."/>
            <person name="Halldorsson B.V."/>
            <person name="Hannenhalli S."/>
            <person name="Turner R."/>
            <person name="Yooseph S."/>
            <person name="Lu F."/>
            <person name="Nusskern D.R."/>
            <person name="Shue B.C."/>
            <person name="Zheng X.H."/>
            <person name="Zhong F."/>
            <person name="Delcher A.L."/>
            <person name="Huson D.H."/>
            <person name="Kravitz S.A."/>
            <person name="Mouchard L."/>
            <person name="Reinert K."/>
            <person name="Remington K.A."/>
            <person name="Clark A.G."/>
            <person name="Waterman M.S."/>
            <person name="Eichler E.E."/>
            <person name="Adams M.D."/>
            <person name="Hunkapiller M.W."/>
            <person name="Myers E.W."/>
            <person name="Venter J.C."/>
        </authorList>
    </citation>
    <scope>NUCLEOTIDE SEQUENCE [LARGE SCALE GENOMIC DNA]</scope>
</reference>
<reference key="8">
    <citation type="journal article" date="2004" name="Genome Res.">
        <title>The status, quality, and expansion of the NIH full-length cDNA project: the Mammalian Gene Collection (MGC).</title>
        <authorList>
            <consortium name="The MGC Project Team"/>
        </authorList>
    </citation>
    <scope>NUCLEOTIDE SEQUENCE [LARGE SCALE MRNA] (ISOFORM 1)</scope>
    <source>
        <tissue>Kidney</tissue>
    </source>
</reference>
<reference key="9">
    <citation type="journal article" date="2008" name="Mol. Cell">
        <title>Kinase-selective enrichment enables quantitative phosphoproteomics of the kinome across the cell cycle.</title>
        <authorList>
            <person name="Daub H."/>
            <person name="Olsen J.V."/>
            <person name="Bairlein M."/>
            <person name="Gnad F."/>
            <person name="Oppermann F.S."/>
            <person name="Korner R."/>
            <person name="Greff Z."/>
            <person name="Keri G."/>
            <person name="Stemmann O."/>
            <person name="Mann M."/>
        </authorList>
    </citation>
    <scope>PHOSPHORYLATION [LARGE SCALE ANALYSIS] AT SER-23</scope>
    <scope>IDENTIFICATION BY MASS SPECTROMETRY [LARGE SCALE ANALYSIS]</scope>
    <source>
        <tissue>Cervix carcinoma</tissue>
    </source>
</reference>
<reference key="10">
    <citation type="journal article" date="2012" name="Proc. Natl. Acad. Sci. U.S.A.">
        <title>N-terminal acetylome analyses and functional insights of the N-terminal acetyltransferase NatB.</title>
        <authorList>
            <person name="Van Damme P."/>
            <person name="Lasa M."/>
            <person name="Polevoda B."/>
            <person name="Gazquez C."/>
            <person name="Elosegui-Artola A."/>
            <person name="Kim D.S."/>
            <person name="De Juan-Pardo E."/>
            <person name="Demeyer K."/>
            <person name="Hole K."/>
            <person name="Larrea E."/>
            <person name="Timmerman E."/>
            <person name="Prieto J."/>
            <person name="Arnesen T."/>
            <person name="Sherman F."/>
            <person name="Gevaert K."/>
            <person name="Aldabe R."/>
        </authorList>
    </citation>
    <scope>IDENTIFICATION BY MASS SPECTROMETRY [LARGE SCALE ANALYSIS]</scope>
</reference>
<reference key="11">
    <citation type="journal article" date="2019" name="FEBS Lett.">
        <title>GLUT6 is a lysosomal transporter that is regulated by inflammatory stimuli and modulates glycolysis in macrophages.</title>
        <authorList>
            <person name="Maedera S."/>
            <person name="Mizuno T."/>
            <person name="Ishiguro H."/>
            <person name="Ito T."/>
            <person name="Soga T."/>
            <person name="Kusuhara H."/>
        </authorList>
    </citation>
    <scope>FUNCTION</scope>
    <scope>SUBCELLULAR LOCATION</scope>
    <scope>INDUCTION</scope>
</reference>
<gene>
    <name evidence="12" type="primary">SLC2A6</name>
    <name evidence="8" type="synonym">GLUT6</name>
</gene>
<dbReference type="EMBL" id="Y17803">
    <property type="protein sequence ID" value="CAB96996.1"/>
    <property type="molecule type" value="mRNA"/>
</dbReference>
<dbReference type="EMBL" id="AJ011372">
    <property type="protein sequence ID" value="CAB66155.1"/>
    <property type="molecule type" value="mRNA"/>
</dbReference>
<dbReference type="EMBL" id="AK074927">
    <property type="protein sequence ID" value="BAC11297.1"/>
    <property type="molecule type" value="mRNA"/>
</dbReference>
<dbReference type="EMBL" id="AK222919">
    <property type="protein sequence ID" value="BAD96639.1"/>
    <property type="molecule type" value="mRNA"/>
</dbReference>
<dbReference type="EMBL" id="AK074836">
    <property type="protein sequence ID" value="BAC11235.1"/>
    <property type="molecule type" value="mRNA"/>
</dbReference>
<dbReference type="EMBL" id="AL593848">
    <property type="status" value="NOT_ANNOTATED_CDS"/>
    <property type="molecule type" value="Genomic_DNA"/>
</dbReference>
<dbReference type="EMBL" id="CH471090">
    <property type="protein sequence ID" value="EAW88093.1"/>
    <property type="molecule type" value="Genomic_DNA"/>
</dbReference>
<dbReference type="EMBL" id="CH471090">
    <property type="protein sequence ID" value="EAW88094.1"/>
    <property type="molecule type" value="Genomic_DNA"/>
</dbReference>
<dbReference type="EMBL" id="BC013740">
    <property type="protein sequence ID" value="AAH13740.1"/>
    <property type="molecule type" value="mRNA"/>
</dbReference>
<dbReference type="CCDS" id="CCDS48052.1">
    <molecule id="Q9UGQ3-2"/>
</dbReference>
<dbReference type="CCDS" id="CCDS6975.1">
    <molecule id="Q9UGQ3-1"/>
</dbReference>
<dbReference type="RefSeq" id="NP_001138571.1">
    <molecule id="Q9UGQ3-2"/>
    <property type="nucleotide sequence ID" value="NM_001145099.2"/>
</dbReference>
<dbReference type="RefSeq" id="NP_060055.2">
    <molecule id="Q9UGQ3-1"/>
    <property type="nucleotide sequence ID" value="NM_017585.4"/>
</dbReference>
<dbReference type="SMR" id="Q9UGQ3"/>
<dbReference type="BioGRID" id="116352">
    <property type="interactions" value="21"/>
</dbReference>
<dbReference type="FunCoup" id="Q9UGQ3">
    <property type="interactions" value="119"/>
</dbReference>
<dbReference type="IntAct" id="Q9UGQ3">
    <property type="interactions" value="7"/>
</dbReference>
<dbReference type="MINT" id="Q9UGQ3"/>
<dbReference type="STRING" id="9606.ENSP00000360966"/>
<dbReference type="DrugBank" id="DB01914">
    <property type="generic name" value="D-glucose"/>
</dbReference>
<dbReference type="DrugBank" id="DB09341">
    <property type="generic name" value="Dextrose, unspecified form"/>
</dbReference>
<dbReference type="DrugBank" id="DB09502">
    <property type="generic name" value="Fludeoxyglucose (18F)"/>
</dbReference>
<dbReference type="TCDB" id="2.A.1.1.88">
    <property type="family name" value="the major facilitator superfamily (mfs)"/>
</dbReference>
<dbReference type="GlyCosmos" id="Q9UGQ3">
    <property type="glycosylation" value="1 site, No reported glycans"/>
</dbReference>
<dbReference type="GlyGen" id="Q9UGQ3">
    <property type="glycosylation" value="2 sites, 1 O-linked glycan (1 site)"/>
</dbReference>
<dbReference type="iPTMnet" id="Q9UGQ3"/>
<dbReference type="PhosphoSitePlus" id="Q9UGQ3"/>
<dbReference type="SwissPalm" id="Q9UGQ3"/>
<dbReference type="BioMuta" id="SLC2A6"/>
<dbReference type="DMDM" id="150421565"/>
<dbReference type="jPOST" id="Q9UGQ3"/>
<dbReference type="MassIVE" id="Q9UGQ3"/>
<dbReference type="PaxDb" id="9606-ENSP00000360966"/>
<dbReference type="PeptideAtlas" id="Q9UGQ3"/>
<dbReference type="ProteomicsDB" id="84259">
    <molecule id="Q9UGQ3-1"/>
</dbReference>
<dbReference type="ProteomicsDB" id="84260">
    <molecule id="Q9UGQ3-2"/>
</dbReference>
<dbReference type="Antibodypedia" id="18448">
    <property type="antibodies" value="127 antibodies from 21 providers"/>
</dbReference>
<dbReference type="DNASU" id="11182"/>
<dbReference type="Ensembl" id="ENST00000371897.8">
    <molecule id="Q9UGQ3-2"/>
    <property type="protein sequence ID" value="ENSP00000360964.4"/>
    <property type="gene ID" value="ENSG00000160326.14"/>
</dbReference>
<dbReference type="Ensembl" id="ENST00000371899.9">
    <molecule id="Q9UGQ3-1"/>
    <property type="protein sequence ID" value="ENSP00000360966.4"/>
    <property type="gene ID" value="ENSG00000160326.14"/>
</dbReference>
<dbReference type="Ensembl" id="ENST00000625425.2">
    <molecule id="Q9UGQ3-2"/>
    <property type="protein sequence ID" value="ENSP00000486637.1"/>
    <property type="gene ID" value="ENSG00000281165.3"/>
</dbReference>
<dbReference type="Ensembl" id="ENST00000626271.3">
    <molecule id="Q9UGQ3-1"/>
    <property type="protein sequence ID" value="ENSP00000487067.1"/>
    <property type="gene ID" value="ENSG00000281165.3"/>
</dbReference>
<dbReference type="GeneID" id="11182"/>
<dbReference type="KEGG" id="hsa:11182"/>
<dbReference type="MANE-Select" id="ENST00000371899.9">
    <property type="protein sequence ID" value="ENSP00000360966.4"/>
    <property type="RefSeq nucleotide sequence ID" value="NM_017585.4"/>
    <property type="RefSeq protein sequence ID" value="NP_060055.2"/>
</dbReference>
<dbReference type="UCSC" id="uc004cee.4">
    <molecule id="Q9UGQ3-1"/>
    <property type="organism name" value="human"/>
</dbReference>
<dbReference type="AGR" id="HGNC:11011"/>
<dbReference type="CTD" id="11182"/>
<dbReference type="DisGeNET" id="11182"/>
<dbReference type="GeneCards" id="SLC2A6"/>
<dbReference type="HGNC" id="HGNC:11011">
    <property type="gene designation" value="SLC2A6"/>
</dbReference>
<dbReference type="HPA" id="ENSG00000160326">
    <property type="expression patterns" value="Tissue enhanced (brain, lymphoid tissue)"/>
</dbReference>
<dbReference type="MIM" id="606813">
    <property type="type" value="gene"/>
</dbReference>
<dbReference type="neXtProt" id="NX_Q9UGQ3"/>
<dbReference type="OpenTargets" id="ENSG00000160326"/>
<dbReference type="PharmGKB" id="PA35881"/>
<dbReference type="VEuPathDB" id="HostDB:ENSG00000160326"/>
<dbReference type="eggNOG" id="KOG0254">
    <property type="taxonomic scope" value="Eukaryota"/>
</dbReference>
<dbReference type="GeneTree" id="ENSGT00940000159976"/>
<dbReference type="HOGENOM" id="CLU_001265_30_5_1"/>
<dbReference type="InParanoid" id="Q9UGQ3"/>
<dbReference type="OMA" id="VTCVLVY"/>
<dbReference type="OrthoDB" id="6612291at2759"/>
<dbReference type="PAN-GO" id="Q9UGQ3">
    <property type="GO annotations" value="3 GO annotations based on evolutionary models"/>
</dbReference>
<dbReference type="PhylomeDB" id="Q9UGQ3"/>
<dbReference type="TreeFam" id="TF325324"/>
<dbReference type="PathwayCommons" id="Q9UGQ3"/>
<dbReference type="Reactome" id="R-HSA-189200">
    <property type="pathway name" value="Cellular hexose transport"/>
</dbReference>
<dbReference type="SignaLink" id="Q9UGQ3"/>
<dbReference type="BioGRID-ORCS" id="11182">
    <property type="hits" value="11 hits in 1149 CRISPR screens"/>
</dbReference>
<dbReference type="ChiTaRS" id="SLC2A6">
    <property type="organism name" value="human"/>
</dbReference>
<dbReference type="GeneWiki" id="SLC2A6"/>
<dbReference type="GenomeRNAi" id="11182"/>
<dbReference type="Pharos" id="Q9UGQ3">
    <property type="development level" value="Tbio"/>
</dbReference>
<dbReference type="PRO" id="PR:Q9UGQ3"/>
<dbReference type="Proteomes" id="UP000005640">
    <property type="component" value="Chromosome 9"/>
</dbReference>
<dbReference type="RNAct" id="Q9UGQ3">
    <property type="molecule type" value="protein"/>
</dbReference>
<dbReference type="Bgee" id="ENSG00000160326">
    <property type="expression patterns" value="Expressed in granulocyte and 96 other cell types or tissues"/>
</dbReference>
<dbReference type="ExpressionAtlas" id="Q9UGQ3">
    <property type="expression patterns" value="baseline and differential"/>
</dbReference>
<dbReference type="GO" id="GO:0005765">
    <property type="term" value="C:lysosomal membrane"/>
    <property type="evidence" value="ECO:0000314"/>
    <property type="project" value="UniProtKB"/>
</dbReference>
<dbReference type="GO" id="GO:0016020">
    <property type="term" value="C:membrane"/>
    <property type="evidence" value="ECO:0000318"/>
    <property type="project" value="GO_Central"/>
</dbReference>
<dbReference type="GO" id="GO:0005886">
    <property type="term" value="C:plasma membrane"/>
    <property type="evidence" value="ECO:0000304"/>
    <property type="project" value="Reactome"/>
</dbReference>
<dbReference type="GO" id="GO:0055056">
    <property type="term" value="F:D-glucose transmembrane transporter activity"/>
    <property type="evidence" value="ECO:0000250"/>
    <property type="project" value="UniProtKB"/>
</dbReference>
<dbReference type="GO" id="GO:0033300">
    <property type="term" value="F:dehydroascorbic acid transmembrane transporter activity"/>
    <property type="evidence" value="ECO:0000250"/>
    <property type="project" value="UniProtKB"/>
</dbReference>
<dbReference type="GO" id="GO:0005353">
    <property type="term" value="F:fructose transmembrane transporter activity"/>
    <property type="evidence" value="ECO:0000250"/>
    <property type="project" value="UniProtKB"/>
</dbReference>
<dbReference type="GO" id="GO:0022857">
    <property type="term" value="F:transmembrane transporter activity"/>
    <property type="evidence" value="ECO:0000318"/>
    <property type="project" value="GO_Central"/>
</dbReference>
<dbReference type="GO" id="GO:1904659">
    <property type="term" value="P:D-glucose transmembrane transport"/>
    <property type="evidence" value="ECO:0000250"/>
    <property type="project" value="UniProtKB"/>
</dbReference>
<dbReference type="GO" id="GO:0070837">
    <property type="term" value="P:dehydroascorbic acid transport"/>
    <property type="evidence" value="ECO:0000250"/>
    <property type="project" value="UniProtKB"/>
</dbReference>
<dbReference type="GO" id="GO:0015755">
    <property type="term" value="P:fructose transmembrane transport"/>
    <property type="evidence" value="ECO:0000250"/>
    <property type="project" value="UniProtKB"/>
</dbReference>
<dbReference type="GO" id="GO:0008645">
    <property type="term" value="P:hexose transmembrane transport"/>
    <property type="evidence" value="ECO:0000304"/>
    <property type="project" value="Reactome"/>
</dbReference>
<dbReference type="GO" id="GO:0006110">
    <property type="term" value="P:regulation of glycolytic process"/>
    <property type="evidence" value="ECO:0000315"/>
    <property type="project" value="UniProtKB"/>
</dbReference>
<dbReference type="GO" id="GO:0055085">
    <property type="term" value="P:transmembrane transport"/>
    <property type="evidence" value="ECO:0000318"/>
    <property type="project" value="GO_Central"/>
</dbReference>
<dbReference type="CDD" id="cd17434">
    <property type="entry name" value="MFS_GLUT6_Class3"/>
    <property type="match status" value="1"/>
</dbReference>
<dbReference type="FunFam" id="1.20.1250.20:FF:000221">
    <property type="entry name" value="solute carrier family 2, facilitated glucose transporter member 6"/>
    <property type="match status" value="1"/>
</dbReference>
<dbReference type="Gene3D" id="1.20.1250.20">
    <property type="entry name" value="MFS general substrate transporter like domains"/>
    <property type="match status" value="1"/>
</dbReference>
<dbReference type="InterPro" id="IPR020846">
    <property type="entry name" value="MFS_dom"/>
</dbReference>
<dbReference type="InterPro" id="IPR005828">
    <property type="entry name" value="MFS_sugar_transport-like"/>
</dbReference>
<dbReference type="InterPro" id="IPR036259">
    <property type="entry name" value="MFS_trans_sf"/>
</dbReference>
<dbReference type="InterPro" id="IPR050549">
    <property type="entry name" value="MFS_Trehalose_Transporter"/>
</dbReference>
<dbReference type="InterPro" id="IPR003663">
    <property type="entry name" value="Sugar/inositol_transpt"/>
</dbReference>
<dbReference type="InterPro" id="IPR005829">
    <property type="entry name" value="Sugar_transporter_CS"/>
</dbReference>
<dbReference type="NCBIfam" id="TIGR00879">
    <property type="entry name" value="SP"/>
    <property type="match status" value="1"/>
</dbReference>
<dbReference type="PANTHER" id="PTHR48021">
    <property type="match status" value="1"/>
</dbReference>
<dbReference type="PANTHER" id="PTHR48021:SF59">
    <property type="entry name" value="SOLUTE CARRIER FAMILY 2, FACILITATED GLUCOSE TRANSPORTER MEMBER 6"/>
    <property type="match status" value="1"/>
</dbReference>
<dbReference type="Pfam" id="PF00083">
    <property type="entry name" value="Sugar_tr"/>
    <property type="match status" value="1"/>
</dbReference>
<dbReference type="PRINTS" id="PR00171">
    <property type="entry name" value="SUGRTRNSPORT"/>
</dbReference>
<dbReference type="SUPFAM" id="SSF103473">
    <property type="entry name" value="MFS general substrate transporter"/>
    <property type="match status" value="1"/>
</dbReference>
<dbReference type="PROSITE" id="PS50850">
    <property type="entry name" value="MFS"/>
    <property type="match status" value="1"/>
</dbReference>
<dbReference type="PROSITE" id="PS00216">
    <property type="entry name" value="SUGAR_TRANSPORT_1"/>
    <property type="match status" value="1"/>
</dbReference>
<dbReference type="PROSITE" id="PS00217">
    <property type="entry name" value="SUGAR_TRANSPORT_2"/>
    <property type="match status" value="1"/>
</dbReference>
<accession>Q9UGQ3</accession>
<accession>A6NNU6</accession>
<accession>Q5SXD7</accession>
<accession>Q8NCC2</accession>
<keyword id="KW-0025">Alternative splicing</keyword>
<keyword id="KW-0325">Glycoprotein</keyword>
<keyword id="KW-0458">Lysosome</keyword>
<keyword id="KW-0472">Membrane</keyword>
<keyword id="KW-0597">Phosphoprotein</keyword>
<keyword id="KW-1267">Proteomics identification</keyword>
<keyword id="KW-1185">Reference proteome</keyword>
<keyword id="KW-0762">Sugar transport</keyword>
<keyword id="KW-0812">Transmembrane</keyword>
<keyword id="KW-1133">Transmembrane helix</keyword>
<keyword id="KW-0813">Transport</keyword>
<evidence type="ECO:0000250" key="1">
    <source>
        <dbReference type="UniProtKB" id="P11169"/>
    </source>
</evidence>
<evidence type="ECO:0000255" key="2"/>
<evidence type="ECO:0000256" key="3">
    <source>
        <dbReference type="SAM" id="MobiDB-lite"/>
    </source>
</evidence>
<evidence type="ECO:0000269" key="4">
    <source>
    </source>
</evidence>
<evidence type="ECO:0000269" key="5">
    <source>
    </source>
</evidence>
<evidence type="ECO:0000269" key="6">
    <source ref="2"/>
</evidence>
<evidence type="ECO:0000303" key="7">
    <source>
    </source>
</evidence>
<evidence type="ECO:0000303" key="8">
    <source>
    </source>
</evidence>
<evidence type="ECO:0000305" key="9"/>
<evidence type="ECO:0000305" key="10">
    <source>
    </source>
</evidence>
<evidence type="ECO:0000305" key="11">
    <source>
    </source>
</evidence>
<evidence type="ECO:0000312" key="12">
    <source>
        <dbReference type="HGNC" id="HGNC:11011"/>
    </source>
</evidence>
<evidence type="ECO:0007744" key="13">
    <source>
    </source>
</evidence>
<feature type="chain" id="PRO_0000050373" description="Solute carrier family 2, facilitated glucose transporter member 6">
    <location>
        <begin position="1"/>
        <end position="507"/>
    </location>
</feature>
<feature type="topological domain" description="Cytoplasmic" evidence="2">
    <location>
        <begin position="1"/>
        <end position="37"/>
    </location>
</feature>
<feature type="transmembrane region" description="Helical; Name=1" evidence="2">
    <location>
        <begin position="38"/>
        <end position="58"/>
    </location>
</feature>
<feature type="topological domain" description="Extracellular" evidence="2">
    <location>
        <begin position="59"/>
        <end position="81"/>
    </location>
</feature>
<feature type="transmembrane region" description="Helical; Name=2" evidence="2">
    <location>
        <begin position="82"/>
        <end position="102"/>
    </location>
</feature>
<feature type="topological domain" description="Cytoplasmic" evidence="2">
    <location>
        <begin position="103"/>
        <end position="111"/>
    </location>
</feature>
<feature type="transmembrane region" description="Helical; Name=3" evidence="2">
    <location>
        <begin position="112"/>
        <end position="132"/>
    </location>
</feature>
<feature type="topological domain" description="Extracellular" evidence="2">
    <location>
        <begin position="133"/>
        <end position="140"/>
    </location>
</feature>
<feature type="transmembrane region" description="Helical; Name=4" evidence="2">
    <location>
        <begin position="141"/>
        <end position="161"/>
    </location>
</feature>
<feature type="topological domain" description="Cytoplasmic" evidence="2">
    <location>
        <begin position="162"/>
        <end position="168"/>
    </location>
</feature>
<feature type="transmembrane region" description="Helical; Name=5" evidence="2">
    <location>
        <begin position="169"/>
        <end position="189"/>
    </location>
</feature>
<feature type="topological domain" description="Extracellular" evidence="2">
    <location>
        <begin position="190"/>
        <end position="194"/>
    </location>
</feature>
<feature type="transmembrane region" description="Helical; Name=6" evidence="2">
    <location>
        <begin position="195"/>
        <end position="215"/>
    </location>
</feature>
<feature type="topological domain" description="Cytoplasmic" evidence="2">
    <location>
        <begin position="216"/>
        <end position="289"/>
    </location>
</feature>
<feature type="transmembrane region" description="Helical; Name=7" evidence="2">
    <location>
        <begin position="290"/>
        <end position="310"/>
    </location>
</feature>
<feature type="topological domain" description="Extracellular" evidence="2">
    <location>
        <begin position="311"/>
        <end position="314"/>
    </location>
</feature>
<feature type="transmembrane region" description="Helical; Name=8" evidence="2">
    <location>
        <begin position="315"/>
        <end position="335"/>
    </location>
</feature>
<feature type="topological domain" description="Cytoplasmic" evidence="2">
    <location>
        <begin position="336"/>
        <end position="339"/>
    </location>
</feature>
<feature type="transmembrane region" description="Helical; Name=9" evidence="2">
    <location>
        <begin position="340"/>
        <end position="360"/>
    </location>
</feature>
<feature type="topological domain" description="Extracellular" evidence="2">
    <location>
        <begin position="361"/>
        <end position="395"/>
    </location>
</feature>
<feature type="transmembrane region" description="Helical; Name=10" evidence="2">
    <location>
        <begin position="396"/>
        <end position="416"/>
    </location>
</feature>
<feature type="topological domain" description="Cytoplasmic" evidence="2">
    <location>
        <begin position="417"/>
        <end position="435"/>
    </location>
</feature>
<feature type="transmembrane region" description="Helical; Name=11" evidence="2">
    <location>
        <begin position="436"/>
        <end position="456"/>
    </location>
</feature>
<feature type="topological domain" description="Extracellular" evidence="2">
    <location>
        <begin position="457"/>
        <end position="462"/>
    </location>
</feature>
<feature type="transmembrane region" description="Helical; Name=12" evidence="2">
    <location>
        <begin position="463"/>
        <end position="483"/>
    </location>
</feature>
<feature type="topological domain" description="Cytoplasmic" evidence="2">
    <location>
        <begin position="484"/>
        <end position="507"/>
    </location>
</feature>
<feature type="region of interest" description="Disordered" evidence="3">
    <location>
        <begin position="1"/>
        <end position="28"/>
    </location>
</feature>
<feature type="short sequence motif" description="Dileucine internalization motif" evidence="2">
    <location>
        <begin position="5"/>
        <end position="6"/>
    </location>
</feature>
<feature type="binding site" evidence="1">
    <location>
        <position position="174"/>
    </location>
    <ligand>
        <name>a D-hexose</name>
        <dbReference type="ChEBI" id="CHEBI:4194"/>
    </ligand>
</feature>
<feature type="binding site" evidence="1">
    <location>
        <begin position="286"/>
        <end position="287"/>
    </location>
    <ligand>
        <name>a D-hexose</name>
        <dbReference type="ChEBI" id="CHEBI:4194"/>
    </ligand>
</feature>
<feature type="binding site" evidence="1">
    <location>
        <position position="418"/>
    </location>
    <ligand>
        <name>a D-hexose</name>
        <dbReference type="ChEBI" id="CHEBI:4194"/>
    </ligand>
</feature>
<feature type="modified residue" description="Phosphoserine" evidence="13">
    <location>
        <position position="23"/>
    </location>
</feature>
<feature type="glycosylation site" description="N-linked (GlcNAc...) asparagine" evidence="2">
    <location>
        <position position="370"/>
    </location>
</feature>
<feature type="splice variant" id="VSP_041402" description="In isoform 2." evidence="7">
    <location>
        <begin position="346"/>
        <end position="407"/>
    </location>
</feature>
<feature type="sequence variant" id="VAR_025426" description="In dbSNP:rs3094378." evidence="4 6">
    <original>T</original>
    <variation>M</variation>
    <location>
        <position position="500"/>
    </location>
</feature>
<proteinExistence type="evidence at protein level"/>
<protein>
    <recommendedName>
        <fullName evidence="9">Solute carrier family 2, facilitated glucose transporter member 6</fullName>
    </recommendedName>
    <alternativeName>
        <fullName evidence="8">Glucose transporter type 6</fullName>
        <shortName evidence="8">GLUT-6</shortName>
    </alternativeName>
</protein>
<sequence length="507" mass="54539">MQEPLLGAEGPDYDTFPEKPPPSPGDRARVGTLQNKRVFLATFAAVLGNFSFGYALVYTSPVIPALERSLDPDLHLTKSQASWFGSVFTLGAAAGGLSAMILNDLLGRKLSIMFSAVPSAAGYALMAGAHGLWMLLLGRTLTGFAGGLTAACIPVYVSEIAPPGVRGALGATPQLMAVFGSLSLYALGLLLPWRWLAVAGEAPVLIMILLLSFMPNSPRFLLSRGRDEEALRALAWLRGTDVDVHWEFEQIQDNVRRQSSRVSWAEARAPHVCRPITVALLMRLLQQLTGITPILVYLQSIFDSTAVLLPPKDDAAIVGAVRLLSVLIAALTMDLAGRKVLLFVSAAIMFAANLTLGLYIHFGPRPLSPNSTAGLESESWGDLAQPLAAPAGYLTLVPLLATMLFIMGYAVGWGPITWLLMSEVLPLRARGVASGLCVLASWLTAFVLTKSFLPVVSTFGLQVPFFFFAAICLVSLVFTGCCVPETKGRSLEQIESFFRTGRRSFLR</sequence>
<organism>
    <name type="scientific">Homo sapiens</name>
    <name type="common">Human</name>
    <dbReference type="NCBI Taxonomy" id="9606"/>
    <lineage>
        <taxon>Eukaryota</taxon>
        <taxon>Metazoa</taxon>
        <taxon>Chordata</taxon>
        <taxon>Craniata</taxon>
        <taxon>Vertebrata</taxon>
        <taxon>Euteleostomi</taxon>
        <taxon>Mammalia</taxon>
        <taxon>Eutheria</taxon>
        <taxon>Euarchontoglires</taxon>
        <taxon>Primates</taxon>
        <taxon>Haplorrhini</taxon>
        <taxon>Catarrhini</taxon>
        <taxon>Hominidae</taxon>
        <taxon>Homo</taxon>
    </lineage>
</organism>
<name>GTR6_HUMAN</name>
<comment type="function">
    <text evidence="5 11">Probable sugar transporter that acts as a regulator of glycolysis in macrophages (Probable). Does not transport glucose (PubMed:30431159).</text>
</comment>
<comment type="interaction">
    <interactant intactId="EBI-18004831">
        <id>Q9UGQ3</id>
    </interactant>
    <interactant intactId="EBI-8638294">
        <id>Q9NUH8</id>
        <label>TMEM14B</label>
    </interactant>
    <organismsDiffer>false</organismsDiffer>
    <experiments>3</experiments>
</comment>
<comment type="subcellular location">
    <subcellularLocation>
        <location evidence="5">Lysosome membrane</location>
        <topology evidence="2">Multi-pass membrane protein</topology>
    </subcellularLocation>
</comment>
<comment type="alternative products">
    <event type="alternative splicing"/>
    <isoform>
        <id>Q9UGQ3-1</id>
        <name>1</name>
        <sequence type="displayed"/>
    </isoform>
    <isoform>
        <id>Q9UGQ3-2</id>
        <name>2</name>
        <sequence type="described" ref="VSP_041402"/>
    </isoform>
</comment>
<comment type="tissue specificity">
    <text evidence="4">Highly expressed in brain, spleen and peripheral blood leukocytes.</text>
</comment>
<comment type="induction">
    <text evidence="5">By lipopolysaccharide (LPS).</text>
</comment>
<comment type="similarity">
    <text evidence="9">Belongs to the major facilitator superfamily. Sugar transporter (TC 2.A.1.1) family. Glucose transporter subfamily.</text>
</comment>
<comment type="caution">
    <text evidence="4 5">Was initially thought to act as a glucose transporter (PubMed:10970791). However, later studies demonstrated that it does not transport glucose (PubMed:30431159).</text>
</comment>
<comment type="caution">
    <text evidence="10">Was named GLUT9 by a report, but this gene name has already been used for SLC2A9.</text>
</comment>